<sequence>MQPTDPNKFTEKAWEAIAKTPEIAKQHRQQQIETEHLLSALLEQNGLATSIFNKAGASIPRVNDQVNSFIAQQPKLSNPSESIYLGRSLDKLLDNAEIAKSKYGDDYISIEHLMAAYGQDDRLGKNLYREIGLTENKLAEIIKQIRGTQKVTDQNPEGKYESLEKYGRDLTELAREGKLDPVIGRDEEVRRTIQILSRRTKNNPVLIGEPGVGKTAIAEGLAQRIINHDVPESLRDRKLISLDMGALIAGAKYRGEFEERLKAVLKEVTDSQGQIILFIDEIHTVVGAGATQGAMDAGNLLKPMLARGALRCIGATTLDEYRKYIEKDAALERRFQEVLVDEPNVLDTISILRGLKERYEVHHGVKIADSALVAAAMLSNRYISDRFLPDKAIDLVDEAAAKLKMEITSKPEELDEVDRKILQLEMERLSLQRENDSASKERLEKLEKELADFKEEQSKLNGQWQSEKTVIDQIRTVKETIDQVNLEIQQAQRDYDYNKAAELQYGKLTDLQRQVEALETQLAEQQTSGKSLLREEVLESDIAEIISKWTGIPISKLVESEKEKLLHLEDELHSRVIGQDEAVTAVAEAIQRSRAGLSDPNRPTASFIFLGPTGVGKTELAKALAKNLFDTEEALVRIDMSEYMEKHAVSRLMGAPPGYVGYEEGGQLTEAIRRRPYSVILFDEIEKAHGDVFNVMLQILDDGRLTDAQGHVVDFKNTIIIMTSNLGSQYILDVAGDDSRYEEMRSRVMDVMRENFRPEFLNRVDETIIFHGLQKSELRSIVQIQIQSLATRLEEQKLTLKLTDKALDFLAAVGYDPVYGARPLKRAVQKYLETAIAKGILRGDYKPGETIVVDETDERLSFTSLRGDLVIV</sequence>
<organism>
    <name type="scientific">Synechocystis sp. (strain ATCC 27184 / PCC 6803 / Kazusa)</name>
    <dbReference type="NCBI Taxonomy" id="1111708"/>
    <lineage>
        <taxon>Bacteria</taxon>
        <taxon>Bacillati</taxon>
        <taxon>Cyanobacteriota</taxon>
        <taxon>Cyanophyceae</taxon>
        <taxon>Synechococcales</taxon>
        <taxon>Merismopediaceae</taxon>
        <taxon>Synechocystis</taxon>
    </lineage>
</organism>
<protein>
    <recommendedName>
        <fullName>Chaperone protein ClpB 2</fullName>
    </recommendedName>
</protein>
<dbReference type="EMBL" id="BA000022">
    <property type="protein sequence ID" value="BAA18456.1"/>
    <property type="molecule type" value="Genomic_DNA"/>
</dbReference>
<dbReference type="PIR" id="S76197">
    <property type="entry name" value="S76197"/>
</dbReference>
<dbReference type="SMR" id="P74361"/>
<dbReference type="IntAct" id="P74361">
    <property type="interactions" value="6"/>
</dbReference>
<dbReference type="STRING" id="1148.gene:10499333"/>
<dbReference type="PaxDb" id="1148-1653543"/>
<dbReference type="EnsemblBacteria" id="BAA18456">
    <property type="protein sequence ID" value="BAA18456"/>
    <property type="gene ID" value="BAA18456"/>
</dbReference>
<dbReference type="KEGG" id="syn:slr1641"/>
<dbReference type="eggNOG" id="COG0542">
    <property type="taxonomic scope" value="Bacteria"/>
</dbReference>
<dbReference type="InParanoid" id="P74361"/>
<dbReference type="PhylomeDB" id="P74361"/>
<dbReference type="Proteomes" id="UP000001425">
    <property type="component" value="Chromosome"/>
</dbReference>
<dbReference type="GO" id="GO:0005737">
    <property type="term" value="C:cytoplasm"/>
    <property type="evidence" value="ECO:0000318"/>
    <property type="project" value="GO_Central"/>
</dbReference>
<dbReference type="GO" id="GO:0005524">
    <property type="term" value="F:ATP binding"/>
    <property type="evidence" value="ECO:0007669"/>
    <property type="project" value="UniProtKB-KW"/>
</dbReference>
<dbReference type="GO" id="GO:0016887">
    <property type="term" value="F:ATP hydrolysis activity"/>
    <property type="evidence" value="ECO:0000318"/>
    <property type="project" value="GO_Central"/>
</dbReference>
<dbReference type="GO" id="GO:0034605">
    <property type="term" value="P:cellular response to heat"/>
    <property type="evidence" value="ECO:0000318"/>
    <property type="project" value="GO_Central"/>
</dbReference>
<dbReference type="GO" id="GO:0042026">
    <property type="term" value="P:protein refolding"/>
    <property type="evidence" value="ECO:0007669"/>
    <property type="project" value="InterPro"/>
</dbReference>
<dbReference type="CDD" id="cd00009">
    <property type="entry name" value="AAA"/>
    <property type="match status" value="1"/>
</dbReference>
<dbReference type="CDD" id="cd19499">
    <property type="entry name" value="RecA-like_ClpB_Hsp104-like"/>
    <property type="match status" value="1"/>
</dbReference>
<dbReference type="FunFam" id="1.10.8.60:FF:000017">
    <property type="entry name" value="ATP-dependent chaperone ClpB"/>
    <property type="match status" value="1"/>
</dbReference>
<dbReference type="FunFam" id="3.40.50.300:FF:000120">
    <property type="entry name" value="ATP-dependent chaperone ClpB"/>
    <property type="match status" value="1"/>
</dbReference>
<dbReference type="FunFam" id="3.40.50.300:FF:000025">
    <property type="entry name" value="ATP-dependent Clp protease subunit"/>
    <property type="match status" value="1"/>
</dbReference>
<dbReference type="FunFam" id="3.40.50.300:FF:000010">
    <property type="entry name" value="Chaperone clpB 1, putative"/>
    <property type="match status" value="1"/>
</dbReference>
<dbReference type="Gene3D" id="1.10.8.60">
    <property type="match status" value="1"/>
</dbReference>
<dbReference type="Gene3D" id="1.10.1780.10">
    <property type="entry name" value="Clp, N-terminal domain"/>
    <property type="match status" value="1"/>
</dbReference>
<dbReference type="Gene3D" id="3.40.50.300">
    <property type="entry name" value="P-loop containing nucleotide triphosphate hydrolases"/>
    <property type="match status" value="3"/>
</dbReference>
<dbReference type="InterPro" id="IPR003593">
    <property type="entry name" value="AAA+_ATPase"/>
</dbReference>
<dbReference type="InterPro" id="IPR003959">
    <property type="entry name" value="ATPase_AAA_core"/>
</dbReference>
<dbReference type="InterPro" id="IPR017730">
    <property type="entry name" value="Chaperonin_ClpB"/>
</dbReference>
<dbReference type="InterPro" id="IPR019489">
    <property type="entry name" value="Clp_ATPase_C"/>
</dbReference>
<dbReference type="InterPro" id="IPR036628">
    <property type="entry name" value="Clp_N_dom_sf"/>
</dbReference>
<dbReference type="InterPro" id="IPR004176">
    <property type="entry name" value="Clp_R_dom"/>
</dbReference>
<dbReference type="InterPro" id="IPR001270">
    <property type="entry name" value="ClpA/B"/>
</dbReference>
<dbReference type="InterPro" id="IPR018368">
    <property type="entry name" value="ClpA/B_CS1"/>
</dbReference>
<dbReference type="InterPro" id="IPR028299">
    <property type="entry name" value="ClpA/B_CS2"/>
</dbReference>
<dbReference type="InterPro" id="IPR041546">
    <property type="entry name" value="ClpA/ClpB_AAA_lid"/>
</dbReference>
<dbReference type="InterPro" id="IPR050130">
    <property type="entry name" value="ClpA_ClpB"/>
</dbReference>
<dbReference type="InterPro" id="IPR027417">
    <property type="entry name" value="P-loop_NTPase"/>
</dbReference>
<dbReference type="NCBIfam" id="TIGR03346">
    <property type="entry name" value="chaperone_ClpB"/>
    <property type="match status" value="1"/>
</dbReference>
<dbReference type="PANTHER" id="PTHR11638">
    <property type="entry name" value="ATP-DEPENDENT CLP PROTEASE"/>
    <property type="match status" value="1"/>
</dbReference>
<dbReference type="PANTHER" id="PTHR11638:SF18">
    <property type="entry name" value="HEAT SHOCK PROTEIN 104"/>
    <property type="match status" value="1"/>
</dbReference>
<dbReference type="Pfam" id="PF00004">
    <property type="entry name" value="AAA"/>
    <property type="match status" value="1"/>
</dbReference>
<dbReference type="Pfam" id="PF07724">
    <property type="entry name" value="AAA_2"/>
    <property type="match status" value="1"/>
</dbReference>
<dbReference type="Pfam" id="PF17871">
    <property type="entry name" value="AAA_lid_9"/>
    <property type="match status" value="1"/>
</dbReference>
<dbReference type="Pfam" id="PF02861">
    <property type="entry name" value="Clp_N"/>
    <property type="match status" value="2"/>
</dbReference>
<dbReference type="Pfam" id="PF10431">
    <property type="entry name" value="ClpB_D2-small"/>
    <property type="match status" value="1"/>
</dbReference>
<dbReference type="PRINTS" id="PR00300">
    <property type="entry name" value="CLPPROTEASEA"/>
</dbReference>
<dbReference type="SMART" id="SM00382">
    <property type="entry name" value="AAA"/>
    <property type="match status" value="2"/>
</dbReference>
<dbReference type="SMART" id="SM01086">
    <property type="entry name" value="ClpB_D2-small"/>
    <property type="match status" value="1"/>
</dbReference>
<dbReference type="SUPFAM" id="SSF81923">
    <property type="entry name" value="Double Clp-N motif"/>
    <property type="match status" value="1"/>
</dbReference>
<dbReference type="SUPFAM" id="SSF52540">
    <property type="entry name" value="P-loop containing nucleoside triphosphate hydrolases"/>
    <property type="match status" value="2"/>
</dbReference>
<dbReference type="PROSITE" id="PS51903">
    <property type="entry name" value="CLP_R"/>
    <property type="match status" value="1"/>
</dbReference>
<dbReference type="PROSITE" id="PS00870">
    <property type="entry name" value="CLPAB_1"/>
    <property type="match status" value="1"/>
</dbReference>
<dbReference type="PROSITE" id="PS00871">
    <property type="entry name" value="CLPAB_2"/>
    <property type="match status" value="1"/>
</dbReference>
<gene>
    <name type="primary">clpB2</name>
    <name type="ordered locus">slr1641</name>
</gene>
<reference key="1">
    <citation type="journal article" date="1996" name="DNA Res.">
        <title>Sequence analysis of the genome of the unicellular cyanobacterium Synechocystis sp. strain PCC6803. II. Sequence determination of the entire genome and assignment of potential protein-coding regions.</title>
        <authorList>
            <person name="Kaneko T."/>
            <person name="Sato S."/>
            <person name="Kotani H."/>
            <person name="Tanaka A."/>
            <person name="Asamizu E."/>
            <person name="Nakamura Y."/>
            <person name="Miyajima N."/>
            <person name="Hirosawa M."/>
            <person name="Sugiura M."/>
            <person name="Sasamoto S."/>
            <person name="Kimura T."/>
            <person name="Hosouchi T."/>
            <person name="Matsuno A."/>
            <person name="Muraki A."/>
            <person name="Nakazaki N."/>
            <person name="Naruo K."/>
            <person name="Okumura S."/>
            <person name="Shimpo S."/>
            <person name="Takeuchi C."/>
            <person name="Wada T."/>
            <person name="Watanabe A."/>
            <person name="Yamada M."/>
            <person name="Yasuda M."/>
            <person name="Tabata S."/>
        </authorList>
    </citation>
    <scope>NUCLEOTIDE SEQUENCE [LARGE SCALE GENOMIC DNA]</scope>
    <source>
        <strain>ATCC 27184 / PCC 6803 / Kazusa</strain>
    </source>
</reference>
<keyword id="KW-0067">ATP-binding</keyword>
<keyword id="KW-0143">Chaperone</keyword>
<keyword id="KW-0175">Coiled coil</keyword>
<keyword id="KW-0963">Cytoplasm</keyword>
<keyword id="KW-0547">Nucleotide-binding</keyword>
<keyword id="KW-1185">Reference proteome</keyword>
<keyword id="KW-0677">Repeat</keyword>
<keyword id="KW-0346">Stress response</keyword>
<accession>P74361</accession>
<comment type="function">
    <text evidence="1">Part of a stress-induced multi-chaperone system, it is involved in the recovery of the cell from heat-induced damage, in cooperation with DnaK, DnaJ and GrpE. Acts before DnaK, in the processing of protein aggregates. Protein binding stimulates the ATPase activity; ATP hydrolysis unfolds the denatured protein aggregates, which probably helps expose new hydrophobic binding sites on the surface of ClpB-bound aggregates, contributing to the solubilization and refolding of denatured protein aggregates by DnaK (By similarity).</text>
</comment>
<comment type="subunit">
    <text evidence="1">Homohexamer. The oligomerization is ATP-dependent (By similarity).</text>
</comment>
<comment type="subcellular location">
    <subcellularLocation>
        <location evidence="3">Cytoplasm</location>
    </subcellularLocation>
</comment>
<comment type="domain">
    <text evidence="1">The Clp repeat (R) domain probably functions as a substrate-discriminating domain, recruiting aggregated proteins to the ClpB hexamer and/or stabilizing bound proteins. The NBD2 domain is responsible for oligomerization, whereas the NBD1 domain stabilizes the hexamer probably in an ATP-dependent manner. The movement of the coiled-coil domain is essential for ClpB ability to rescue proteins from an aggregated state, probably by pulling apart large aggregated proteins, which are bound between the coiled-coils motifs of adjacent ClpB subunits in the functional hexamer (By similarity).</text>
</comment>
<comment type="similarity">
    <text evidence="3">Belongs to the ClpA/ClpB family.</text>
</comment>
<feature type="chain" id="PRO_0000191193" description="Chaperone protein ClpB 2">
    <location>
        <begin position="1"/>
        <end position="872"/>
    </location>
</feature>
<feature type="domain" description="Clp R" evidence="2">
    <location>
        <begin position="6"/>
        <end position="148"/>
    </location>
</feature>
<feature type="region of interest" description="Repeat 1" evidence="2">
    <location>
        <begin position="9"/>
        <end position="73"/>
    </location>
</feature>
<feature type="region of interest" description="Repeat 2" evidence="2">
    <location>
        <begin position="85"/>
        <end position="148"/>
    </location>
</feature>
<feature type="region of interest" description="NBD1" evidence="1">
    <location>
        <begin position="161"/>
        <end position="342"/>
    </location>
</feature>
<feature type="region of interest" description="Linker" evidence="1">
    <location>
        <begin position="343"/>
        <end position="551"/>
    </location>
</feature>
<feature type="region of interest" description="NBD2" evidence="1">
    <location>
        <begin position="561"/>
        <end position="772"/>
    </location>
</feature>
<feature type="region of interest" description="C-terminal" evidence="1">
    <location>
        <begin position="773"/>
        <end position="872"/>
    </location>
</feature>
<feature type="coiled-coil region" evidence="1">
    <location>
        <begin position="393"/>
        <end position="527"/>
    </location>
</feature>
<feature type="binding site" evidence="1">
    <location>
        <begin position="208"/>
        <end position="215"/>
    </location>
    <ligand>
        <name>ATP</name>
        <dbReference type="ChEBI" id="CHEBI:30616"/>
        <label>1</label>
    </ligand>
</feature>
<feature type="binding site" evidence="1">
    <location>
        <begin position="611"/>
        <end position="618"/>
    </location>
    <ligand>
        <name>ATP</name>
        <dbReference type="ChEBI" id="CHEBI:30616"/>
        <label>2</label>
    </ligand>
</feature>
<name>CLPB2_SYNY3</name>
<evidence type="ECO:0000250" key="1"/>
<evidence type="ECO:0000255" key="2">
    <source>
        <dbReference type="PROSITE-ProRule" id="PRU01251"/>
    </source>
</evidence>
<evidence type="ECO:0000305" key="3"/>
<proteinExistence type="inferred from homology"/>